<keyword id="KW-0998">Cell outer membrane</keyword>
<keyword id="KW-0133">Cell shape</keyword>
<keyword id="KW-1015">Disulfide bond</keyword>
<keyword id="KW-0449">Lipoprotein</keyword>
<keyword id="KW-0472">Membrane</keyword>
<keyword id="KW-0564">Palmitate</keyword>
<keyword id="KW-0732">Signal</keyword>
<evidence type="ECO:0000250" key="1"/>
<evidence type="ECO:0000255" key="2">
    <source>
        <dbReference type="PROSITE-ProRule" id="PRU00303"/>
    </source>
</evidence>
<evidence type="ECO:0000269" key="3">
    <source>
    </source>
</evidence>
<evidence type="ECO:0000305" key="4"/>
<accession>P0CZ19</accession>
<accession>P27606</accession>
<proteinExistence type="evidence at transcript level"/>
<name>OMCA_CHLPS</name>
<organism>
    <name type="scientific">Chlamydia psittaci</name>
    <name type="common">Chlamydophila psittaci</name>
    <dbReference type="NCBI Taxonomy" id="83554"/>
    <lineage>
        <taxon>Bacteria</taxon>
        <taxon>Pseudomonadati</taxon>
        <taxon>Chlamydiota</taxon>
        <taxon>Chlamydiia</taxon>
        <taxon>Chlamydiales</taxon>
        <taxon>Chlamydiaceae</taxon>
        <taxon>Chlamydia/Chlamydophila group</taxon>
        <taxon>Chlamydia</taxon>
    </lineage>
</organism>
<dbReference type="EMBL" id="X53512">
    <property type="protein sequence ID" value="CAA37591.1"/>
    <property type="molecule type" value="Genomic_DNA"/>
</dbReference>
<dbReference type="RefSeq" id="WP_006342860.1">
    <property type="nucleotide sequence ID" value="NZ_PJPZ02000002.1"/>
</dbReference>
<dbReference type="STRING" id="331636.G5O_0209"/>
<dbReference type="OMA" id="PDGRCKQ"/>
<dbReference type="OrthoDB" id="18978at2"/>
<dbReference type="GO" id="GO:0009279">
    <property type="term" value="C:cell outer membrane"/>
    <property type="evidence" value="ECO:0007669"/>
    <property type="project" value="UniProtKB-SubCell"/>
</dbReference>
<dbReference type="GO" id="GO:0005201">
    <property type="term" value="F:extracellular matrix structural constituent"/>
    <property type="evidence" value="ECO:0007669"/>
    <property type="project" value="InterPro"/>
</dbReference>
<dbReference type="GO" id="GO:0008360">
    <property type="term" value="P:regulation of cell shape"/>
    <property type="evidence" value="ECO:0007669"/>
    <property type="project" value="UniProtKB-KW"/>
</dbReference>
<dbReference type="InterPro" id="IPR003517">
    <property type="entry name" value="Cys-rich_OMP3_Chlamydia"/>
</dbReference>
<dbReference type="Pfam" id="PF03503">
    <property type="entry name" value="Chlam_OMP3"/>
    <property type="match status" value="1"/>
</dbReference>
<dbReference type="PRINTS" id="PR01335">
    <property type="entry name" value="CHLAMIDIAOM3"/>
</dbReference>
<dbReference type="PROSITE" id="PS51257">
    <property type="entry name" value="PROKAR_LIPOPROTEIN"/>
    <property type="match status" value="1"/>
</dbReference>
<feature type="signal peptide" evidence="2">
    <location>
        <begin position="1"/>
        <end position="19"/>
    </location>
</feature>
<feature type="chain" id="PRO_0000018157" description="Small cysteine-rich outer membrane protein omcA">
    <location>
        <begin position="20"/>
        <end position="87"/>
    </location>
</feature>
<feature type="lipid moiety-binding region" description="N-palmitoyl cysteine" evidence="4">
    <location>
        <position position="20"/>
    </location>
</feature>
<feature type="lipid moiety-binding region" description="S-diacylglycerol cysteine" evidence="4">
    <location>
        <position position="20"/>
    </location>
</feature>
<comment type="function">
    <text evidence="1">In elementary bodies (EBs, the infectious stage, which is able to survive outside the host cell) provides the structural integrity of the outer envelope through disulfide cross-links with the large cysteine-rich periplasmic protein and the major outer membrane porin. It has been described in publications as the Sarkosyl-insoluble COMC (Chlamydia outer membrane complex), and serves as the functional equivalent of peptidoglycan (By similarity).</text>
</comment>
<comment type="subunit">
    <text evidence="1">Part of a disulfide cross-linked outer membrane complex (COMC) composed of the major outer membrane porin (MOMP), the small cysteine-rich protein (omcA) and the large cysteine-rich periplasmic protein (omcB).</text>
</comment>
<comment type="subcellular location">
    <subcellularLocation>
        <location evidence="4">Cell outer membrane</location>
        <topology evidence="4">Lipid-anchor</topology>
    </subcellularLocation>
    <text>The protein moiety probably penetrates into the periplasm.</text>
</comment>
<comment type="developmental stage">
    <text evidence="3">It is present but the disulfide bonds are reduced in the intracellular reticulate bodies (RBs).</text>
</comment>
<comment type="PTM">
    <text evidence="1">N-terminal amide-linked and S-diacylglycerol cysteine-linked to 16:0, 18:0, 15:0 branched, and 17:0 branched fatty acids (ratio 6:5:3:4) in the EB stage. The exact distribution of fatty acids has not been determined (By similarity).</text>
</comment>
<comment type="PTM">
    <text evidence="1">The N-terminus is blocked.</text>
</comment>
<gene>
    <name type="primary">omcA</name>
    <name type="synonym">envA</name>
</gene>
<reference key="1">
    <citation type="journal article" date="1995" name="Microbiology">
        <title>The CrP operon of Chlamydia psittaci and Chlamydia pneumoniae.</title>
        <authorList>
            <person name="Watson M.W."/>
            <person name="Clarke I.N."/>
            <person name="Everson J.S."/>
            <person name="Lambden P.R."/>
        </authorList>
    </citation>
    <scope>NUCLEOTIDE SEQUENCE [GENOMIC DNA]</scope>
    <scope>DEVELOPMENTAL STAGE</scope>
    <source>
        <strain>A22/M</strain>
    </source>
</reference>
<protein>
    <recommendedName>
        <fullName>Small cysteine-rich outer membrane protein omcA</fullName>
        <shortName>Small-CRP</shortName>
    </recommendedName>
    <alternativeName>
        <fullName>9 kDa cysteine-rich lipoprotein</fullName>
        <shortName>9KD-CRP</shortName>
    </alternativeName>
</protein>
<sequence>MKKAVLLATVFCGVVGLTSCCRIVDCCFEDPCAPKPCNPCGNKKDKGCSPCGVYTPSCSKPCGSECNPGVQGPQAKGCTSLDGRCKQ</sequence>